<organism>
    <name type="scientific">Legionella pneumophila subsp. pneumophila (strain Philadelphia 1 / ATCC 33152 / DSM 7513)</name>
    <dbReference type="NCBI Taxonomy" id="272624"/>
    <lineage>
        <taxon>Bacteria</taxon>
        <taxon>Pseudomonadati</taxon>
        <taxon>Pseudomonadota</taxon>
        <taxon>Gammaproteobacteria</taxon>
        <taxon>Legionellales</taxon>
        <taxon>Legionellaceae</taxon>
        <taxon>Legionella</taxon>
    </lineage>
</organism>
<proteinExistence type="inferred from homology"/>
<comment type="function">
    <text evidence="1">Hydrolyzes ribosome-free peptidyl-tRNAs (with 1 or more amino acids incorporated), which drop off the ribosome during protein synthesis, or as a result of ribosome stalling.</text>
</comment>
<comment type="function">
    <text evidence="1">Catalyzes the release of premature peptidyl moieties from peptidyl-tRNA molecules trapped in stalled 50S ribosomal subunits, and thus maintains levels of free tRNAs and 50S ribosomes.</text>
</comment>
<comment type="catalytic activity">
    <reaction evidence="1">
        <text>an N-acyl-L-alpha-aminoacyl-tRNA + H2O = an N-acyl-L-amino acid + a tRNA + H(+)</text>
        <dbReference type="Rhea" id="RHEA:54448"/>
        <dbReference type="Rhea" id="RHEA-COMP:10123"/>
        <dbReference type="Rhea" id="RHEA-COMP:13883"/>
        <dbReference type="ChEBI" id="CHEBI:15377"/>
        <dbReference type="ChEBI" id="CHEBI:15378"/>
        <dbReference type="ChEBI" id="CHEBI:59874"/>
        <dbReference type="ChEBI" id="CHEBI:78442"/>
        <dbReference type="ChEBI" id="CHEBI:138191"/>
        <dbReference type="EC" id="3.1.1.29"/>
    </reaction>
</comment>
<comment type="subunit">
    <text evidence="1">Monomer.</text>
</comment>
<comment type="subcellular location">
    <subcellularLocation>
        <location evidence="1">Cytoplasm</location>
    </subcellularLocation>
</comment>
<comment type="similarity">
    <text evidence="1">Belongs to the PTH family.</text>
</comment>
<protein>
    <recommendedName>
        <fullName evidence="1">Peptidyl-tRNA hydrolase</fullName>
        <shortName evidence="1">Pth</shortName>
        <ecNumber evidence="1">3.1.1.29</ecNumber>
    </recommendedName>
</protein>
<dbReference type="EC" id="3.1.1.29" evidence="1"/>
<dbReference type="EMBL" id="AE017354">
    <property type="protein sequence ID" value="AAU28711.1"/>
    <property type="molecule type" value="Genomic_DNA"/>
</dbReference>
<dbReference type="RefSeq" id="WP_010948353.1">
    <property type="nucleotide sequence ID" value="NC_002942.5"/>
</dbReference>
<dbReference type="RefSeq" id="YP_096658.1">
    <property type="nucleotide sequence ID" value="NC_002942.5"/>
</dbReference>
<dbReference type="SMR" id="Q5ZS66"/>
<dbReference type="STRING" id="272624.lpg2653"/>
<dbReference type="PaxDb" id="272624-lpg2653"/>
<dbReference type="GeneID" id="57036652"/>
<dbReference type="KEGG" id="lpn:lpg2653"/>
<dbReference type="PATRIC" id="fig|272624.6.peg.2831"/>
<dbReference type="eggNOG" id="COG0193">
    <property type="taxonomic scope" value="Bacteria"/>
</dbReference>
<dbReference type="HOGENOM" id="CLU_062456_3_1_6"/>
<dbReference type="OrthoDB" id="9800507at2"/>
<dbReference type="Proteomes" id="UP000000609">
    <property type="component" value="Chromosome"/>
</dbReference>
<dbReference type="GO" id="GO:0005737">
    <property type="term" value="C:cytoplasm"/>
    <property type="evidence" value="ECO:0007669"/>
    <property type="project" value="UniProtKB-SubCell"/>
</dbReference>
<dbReference type="GO" id="GO:0004045">
    <property type="term" value="F:peptidyl-tRNA hydrolase activity"/>
    <property type="evidence" value="ECO:0007669"/>
    <property type="project" value="UniProtKB-UniRule"/>
</dbReference>
<dbReference type="GO" id="GO:0000049">
    <property type="term" value="F:tRNA binding"/>
    <property type="evidence" value="ECO:0007669"/>
    <property type="project" value="UniProtKB-UniRule"/>
</dbReference>
<dbReference type="GO" id="GO:0006515">
    <property type="term" value="P:protein quality control for misfolded or incompletely synthesized proteins"/>
    <property type="evidence" value="ECO:0007669"/>
    <property type="project" value="UniProtKB-UniRule"/>
</dbReference>
<dbReference type="GO" id="GO:0072344">
    <property type="term" value="P:rescue of stalled ribosome"/>
    <property type="evidence" value="ECO:0007669"/>
    <property type="project" value="UniProtKB-UniRule"/>
</dbReference>
<dbReference type="CDD" id="cd00462">
    <property type="entry name" value="PTH"/>
    <property type="match status" value="1"/>
</dbReference>
<dbReference type="FunFam" id="3.40.50.1470:FF:000001">
    <property type="entry name" value="Peptidyl-tRNA hydrolase"/>
    <property type="match status" value="1"/>
</dbReference>
<dbReference type="Gene3D" id="3.40.50.1470">
    <property type="entry name" value="Peptidyl-tRNA hydrolase"/>
    <property type="match status" value="1"/>
</dbReference>
<dbReference type="HAMAP" id="MF_00083">
    <property type="entry name" value="Pept_tRNA_hydro_bact"/>
    <property type="match status" value="1"/>
</dbReference>
<dbReference type="InterPro" id="IPR001328">
    <property type="entry name" value="Pept_tRNA_hydro"/>
</dbReference>
<dbReference type="InterPro" id="IPR018171">
    <property type="entry name" value="Pept_tRNA_hydro_CS"/>
</dbReference>
<dbReference type="InterPro" id="IPR036416">
    <property type="entry name" value="Pept_tRNA_hydro_sf"/>
</dbReference>
<dbReference type="NCBIfam" id="TIGR00447">
    <property type="entry name" value="pth"/>
    <property type="match status" value="1"/>
</dbReference>
<dbReference type="PANTHER" id="PTHR17224">
    <property type="entry name" value="PEPTIDYL-TRNA HYDROLASE"/>
    <property type="match status" value="1"/>
</dbReference>
<dbReference type="PANTHER" id="PTHR17224:SF1">
    <property type="entry name" value="PEPTIDYL-TRNA HYDROLASE"/>
    <property type="match status" value="1"/>
</dbReference>
<dbReference type="Pfam" id="PF01195">
    <property type="entry name" value="Pept_tRNA_hydro"/>
    <property type="match status" value="1"/>
</dbReference>
<dbReference type="SUPFAM" id="SSF53178">
    <property type="entry name" value="Peptidyl-tRNA hydrolase-like"/>
    <property type="match status" value="1"/>
</dbReference>
<dbReference type="PROSITE" id="PS01196">
    <property type="entry name" value="PEPT_TRNA_HYDROL_2"/>
    <property type="match status" value="1"/>
</dbReference>
<feature type="chain" id="PRO_0000187758" description="Peptidyl-tRNA hydrolase">
    <location>
        <begin position="1"/>
        <end position="189"/>
    </location>
</feature>
<feature type="active site" description="Proton acceptor" evidence="1">
    <location>
        <position position="21"/>
    </location>
</feature>
<feature type="binding site" evidence="1">
    <location>
        <position position="16"/>
    </location>
    <ligand>
        <name>tRNA</name>
        <dbReference type="ChEBI" id="CHEBI:17843"/>
    </ligand>
</feature>
<feature type="binding site" evidence="1">
    <location>
        <position position="67"/>
    </location>
    <ligand>
        <name>tRNA</name>
        <dbReference type="ChEBI" id="CHEBI:17843"/>
    </ligand>
</feature>
<feature type="binding site" evidence="1">
    <location>
        <position position="69"/>
    </location>
    <ligand>
        <name>tRNA</name>
        <dbReference type="ChEBI" id="CHEBI:17843"/>
    </ligand>
</feature>
<feature type="binding site" evidence="1">
    <location>
        <position position="115"/>
    </location>
    <ligand>
        <name>tRNA</name>
        <dbReference type="ChEBI" id="CHEBI:17843"/>
    </ligand>
</feature>
<feature type="site" description="Discriminates between blocked and unblocked aminoacyl-tRNA" evidence="1">
    <location>
        <position position="11"/>
    </location>
</feature>
<feature type="site" description="Stabilizes the basic form of H active site to accept a proton" evidence="1">
    <location>
        <position position="94"/>
    </location>
</feature>
<evidence type="ECO:0000255" key="1">
    <source>
        <dbReference type="HAMAP-Rule" id="MF_00083"/>
    </source>
</evidence>
<sequence>MVIKLIVGLRNPGSAYEQTRHNAGAWLVTALAQRHNSHFKIDKKMQAELTEIDINNHPCRLVLPLTFMNHSGQTTRIISQFYKIEPGEILIVHDELDLPVGRIKLKTGGGHGGHNGLRDITAQLGTGEFHRLRIGIGHPGHKDLVHQYVLSRPSMHDRQQIYDAIDRGIAIIPIVLSGDMARAMNQVNA</sequence>
<accession>Q5ZS66</accession>
<reference key="1">
    <citation type="journal article" date="2004" name="Science">
        <title>The genomic sequence of the accidental pathogen Legionella pneumophila.</title>
        <authorList>
            <person name="Chien M."/>
            <person name="Morozova I."/>
            <person name="Shi S."/>
            <person name="Sheng H."/>
            <person name="Chen J."/>
            <person name="Gomez S.M."/>
            <person name="Asamani G."/>
            <person name="Hill K."/>
            <person name="Nuara J."/>
            <person name="Feder M."/>
            <person name="Rineer J."/>
            <person name="Greenberg J.J."/>
            <person name="Steshenko V."/>
            <person name="Park S.H."/>
            <person name="Zhao B."/>
            <person name="Teplitskaya E."/>
            <person name="Edwards J.R."/>
            <person name="Pampou S."/>
            <person name="Georghiou A."/>
            <person name="Chou I.-C."/>
            <person name="Iannuccilli W."/>
            <person name="Ulz M.E."/>
            <person name="Kim D.H."/>
            <person name="Geringer-Sameth A."/>
            <person name="Goldsberry C."/>
            <person name="Morozov P."/>
            <person name="Fischer S.G."/>
            <person name="Segal G."/>
            <person name="Qu X."/>
            <person name="Rzhetsky A."/>
            <person name="Zhang P."/>
            <person name="Cayanis E."/>
            <person name="De Jong P.J."/>
            <person name="Ju J."/>
            <person name="Kalachikov S."/>
            <person name="Shuman H.A."/>
            <person name="Russo J.J."/>
        </authorList>
    </citation>
    <scope>NUCLEOTIDE SEQUENCE [LARGE SCALE GENOMIC DNA]</scope>
    <source>
        <strain>Philadelphia 1 / ATCC 33152 / DSM 7513</strain>
    </source>
</reference>
<gene>
    <name evidence="1" type="primary">pth</name>
    <name type="ordered locus">lpg2653</name>
</gene>
<name>PTH_LEGPH</name>
<keyword id="KW-0963">Cytoplasm</keyword>
<keyword id="KW-0378">Hydrolase</keyword>
<keyword id="KW-1185">Reference proteome</keyword>
<keyword id="KW-0694">RNA-binding</keyword>
<keyword id="KW-0820">tRNA-binding</keyword>